<feature type="chain" id="PRO_1000003979" description="Small ribosomal subunit protein uS2">
    <location>
        <begin position="1"/>
        <end position="263"/>
    </location>
</feature>
<name>RS2_HYPNA</name>
<protein>
    <recommendedName>
        <fullName evidence="1">Small ribosomal subunit protein uS2</fullName>
    </recommendedName>
    <alternativeName>
        <fullName evidence="2">30S ribosomal protein S2</fullName>
    </alternativeName>
</protein>
<organism>
    <name type="scientific">Hyphomonas neptunium (strain ATCC 15444)</name>
    <dbReference type="NCBI Taxonomy" id="228405"/>
    <lineage>
        <taxon>Bacteria</taxon>
        <taxon>Pseudomonadati</taxon>
        <taxon>Pseudomonadota</taxon>
        <taxon>Alphaproteobacteria</taxon>
        <taxon>Hyphomonadales</taxon>
        <taxon>Hyphomonadaceae</taxon>
        <taxon>Hyphomonas</taxon>
    </lineage>
</organism>
<proteinExistence type="inferred from homology"/>
<evidence type="ECO:0000255" key="1">
    <source>
        <dbReference type="HAMAP-Rule" id="MF_00291"/>
    </source>
</evidence>
<evidence type="ECO:0000305" key="2"/>
<comment type="similarity">
    <text evidence="1">Belongs to the universal ribosomal protein uS2 family.</text>
</comment>
<keyword id="KW-1185">Reference proteome</keyword>
<keyword id="KW-0687">Ribonucleoprotein</keyword>
<keyword id="KW-0689">Ribosomal protein</keyword>
<gene>
    <name evidence="1" type="primary">rpsB</name>
    <name type="ordered locus">HNE_1768</name>
</gene>
<sequence>MALPDFSMRQLLEAGVHFGHQTHRWNPRMKPYIYGERSGIHIMDLSHTVPALHQSLVFVRDTVAKGGRVLFVGTKRQAQEPVAEAAQRCAQYYMNHRWLGGTLTNWSTVSNSIKQLRELNAMFESGGGSGLTKKELLDLQRRRDKLQKSLGGIADMGGLPAAIVVIDTNKEAIAVQEARKLGIPVVAVLDTNCNPSDADFGFPGNDDAARAISLYCNLFADAVLDGLAESTAGLGVDLGASADIASLADADVKLADEEAAGEA</sequence>
<dbReference type="EMBL" id="CP000158">
    <property type="protein sequence ID" value="ABI77436.1"/>
    <property type="molecule type" value="Genomic_DNA"/>
</dbReference>
<dbReference type="RefSeq" id="WP_011646772.1">
    <property type="nucleotide sequence ID" value="NC_008358.1"/>
</dbReference>
<dbReference type="SMR" id="Q0C1C1"/>
<dbReference type="STRING" id="228405.HNE_1768"/>
<dbReference type="KEGG" id="hne:HNE_1768"/>
<dbReference type="eggNOG" id="COG0052">
    <property type="taxonomic scope" value="Bacteria"/>
</dbReference>
<dbReference type="HOGENOM" id="CLU_040318_2_1_5"/>
<dbReference type="Proteomes" id="UP000001959">
    <property type="component" value="Chromosome"/>
</dbReference>
<dbReference type="GO" id="GO:0022627">
    <property type="term" value="C:cytosolic small ribosomal subunit"/>
    <property type="evidence" value="ECO:0007669"/>
    <property type="project" value="TreeGrafter"/>
</dbReference>
<dbReference type="GO" id="GO:0003735">
    <property type="term" value="F:structural constituent of ribosome"/>
    <property type="evidence" value="ECO:0007669"/>
    <property type="project" value="InterPro"/>
</dbReference>
<dbReference type="GO" id="GO:0006412">
    <property type="term" value="P:translation"/>
    <property type="evidence" value="ECO:0007669"/>
    <property type="project" value="UniProtKB-UniRule"/>
</dbReference>
<dbReference type="CDD" id="cd01425">
    <property type="entry name" value="RPS2"/>
    <property type="match status" value="1"/>
</dbReference>
<dbReference type="FunFam" id="1.10.287.610:FF:000001">
    <property type="entry name" value="30S ribosomal protein S2"/>
    <property type="match status" value="1"/>
</dbReference>
<dbReference type="Gene3D" id="3.40.50.10490">
    <property type="entry name" value="Glucose-6-phosphate isomerase like protein, domain 1"/>
    <property type="match status" value="1"/>
</dbReference>
<dbReference type="Gene3D" id="1.10.287.610">
    <property type="entry name" value="Helix hairpin bin"/>
    <property type="match status" value="1"/>
</dbReference>
<dbReference type="HAMAP" id="MF_00291_B">
    <property type="entry name" value="Ribosomal_uS2_B"/>
    <property type="match status" value="1"/>
</dbReference>
<dbReference type="InterPro" id="IPR001865">
    <property type="entry name" value="Ribosomal_uS2"/>
</dbReference>
<dbReference type="InterPro" id="IPR005706">
    <property type="entry name" value="Ribosomal_uS2_bac/mit/plastid"/>
</dbReference>
<dbReference type="InterPro" id="IPR018130">
    <property type="entry name" value="Ribosomal_uS2_CS"/>
</dbReference>
<dbReference type="InterPro" id="IPR023591">
    <property type="entry name" value="Ribosomal_uS2_flav_dom_sf"/>
</dbReference>
<dbReference type="NCBIfam" id="TIGR01011">
    <property type="entry name" value="rpsB_bact"/>
    <property type="match status" value="1"/>
</dbReference>
<dbReference type="PANTHER" id="PTHR12534">
    <property type="entry name" value="30S RIBOSOMAL PROTEIN S2 PROKARYOTIC AND ORGANELLAR"/>
    <property type="match status" value="1"/>
</dbReference>
<dbReference type="PANTHER" id="PTHR12534:SF0">
    <property type="entry name" value="SMALL RIBOSOMAL SUBUNIT PROTEIN US2M"/>
    <property type="match status" value="1"/>
</dbReference>
<dbReference type="Pfam" id="PF00318">
    <property type="entry name" value="Ribosomal_S2"/>
    <property type="match status" value="1"/>
</dbReference>
<dbReference type="PRINTS" id="PR00395">
    <property type="entry name" value="RIBOSOMALS2"/>
</dbReference>
<dbReference type="SUPFAM" id="SSF52313">
    <property type="entry name" value="Ribosomal protein S2"/>
    <property type="match status" value="1"/>
</dbReference>
<dbReference type="PROSITE" id="PS00962">
    <property type="entry name" value="RIBOSOMAL_S2_1"/>
    <property type="match status" value="1"/>
</dbReference>
<dbReference type="PROSITE" id="PS00963">
    <property type="entry name" value="RIBOSOMAL_S2_2"/>
    <property type="match status" value="1"/>
</dbReference>
<accession>Q0C1C1</accession>
<reference key="1">
    <citation type="journal article" date="2006" name="J. Bacteriol.">
        <title>Comparative genomic evidence for a close relationship between the dimorphic prosthecate bacteria Hyphomonas neptunium and Caulobacter crescentus.</title>
        <authorList>
            <person name="Badger J.H."/>
            <person name="Hoover T.R."/>
            <person name="Brun Y.V."/>
            <person name="Weiner R.M."/>
            <person name="Laub M.T."/>
            <person name="Alexandre G."/>
            <person name="Mrazek J."/>
            <person name="Ren Q."/>
            <person name="Paulsen I.T."/>
            <person name="Nelson K.E."/>
            <person name="Khouri H.M."/>
            <person name="Radune D."/>
            <person name="Sosa J."/>
            <person name="Dodson R.J."/>
            <person name="Sullivan S.A."/>
            <person name="Rosovitz M.J."/>
            <person name="Madupu R."/>
            <person name="Brinkac L.M."/>
            <person name="Durkin A.S."/>
            <person name="Daugherty S.C."/>
            <person name="Kothari S.P."/>
            <person name="Giglio M.G."/>
            <person name="Zhou L."/>
            <person name="Haft D.H."/>
            <person name="Selengut J.D."/>
            <person name="Davidsen T.M."/>
            <person name="Yang Q."/>
            <person name="Zafar N."/>
            <person name="Ward N.L."/>
        </authorList>
    </citation>
    <scope>NUCLEOTIDE SEQUENCE [LARGE SCALE GENOMIC DNA]</scope>
    <source>
        <strain>ATCC 15444</strain>
    </source>
</reference>